<organism>
    <name type="scientific">Plecturocebus moloch</name>
    <name type="common">Dusky titi monkey</name>
    <name type="synonym">Callicebus moloch</name>
    <dbReference type="NCBI Taxonomy" id="9523"/>
    <lineage>
        <taxon>Eukaryota</taxon>
        <taxon>Metazoa</taxon>
        <taxon>Chordata</taxon>
        <taxon>Craniata</taxon>
        <taxon>Vertebrata</taxon>
        <taxon>Euteleostomi</taxon>
        <taxon>Mammalia</taxon>
        <taxon>Eutheria</taxon>
        <taxon>Euarchontoglires</taxon>
        <taxon>Primates</taxon>
        <taxon>Haplorrhini</taxon>
        <taxon>Platyrrhini</taxon>
        <taxon>Pitheciidae</taxon>
        <taxon>Callicebinae</taxon>
        <taxon>Plecturocebus</taxon>
    </lineage>
</organism>
<comment type="function">
    <text evidence="1">Scaffold protein that may play a role in cell adhesion, cell spreading and in the reorganization of the actin cytoskeleton. Plays a role in the regulation of cell proliferation. May act as a tumor suppressor (By similarity).</text>
</comment>
<comment type="subunit">
    <text evidence="1">Interacts via LIM domain 1 with ZYX. Interacts (via LIM domain 3) with ENAH and VASP. Interacts with ALKBH4, talin, actin, alpha-actinin, GRIP1 and PXN (By similarity). Interacts (via LIM domain 2) with ACTL7A (via N-terminus). Heterodimer with ACTL7A; the heterodimer interacts with ENAH to form a heterotrimer (By similarity).</text>
</comment>
<comment type="subcellular location">
    <subcellularLocation>
        <location evidence="1">Cytoplasm</location>
    </subcellularLocation>
    <subcellularLocation>
        <location evidence="1">Cell junction</location>
        <location evidence="1">Focal adhesion</location>
    </subcellularLocation>
    <text evidence="1">Detected along actin stress fibers.</text>
</comment>
<comment type="domain">
    <text evidence="1">The N-terminal and the C-terminal halves of the protein can associate with each other, thereby hindering interactions with ZYX.</text>
</comment>
<comment type="similarity">
    <text evidence="5">Belongs to the prickle / espinas / testin family.</text>
</comment>
<accession>Q2QLC3</accession>
<feature type="chain" id="PRO_0000226344" description="Testin">
    <location>
        <begin position="1"/>
        <end position="421"/>
    </location>
</feature>
<feature type="domain" description="PET" evidence="3">
    <location>
        <begin position="92"/>
        <end position="199"/>
    </location>
</feature>
<feature type="domain" description="LIM zinc-binding 1" evidence="2">
    <location>
        <begin position="234"/>
        <end position="297"/>
    </location>
</feature>
<feature type="domain" description="LIM zinc-binding 2" evidence="2">
    <location>
        <begin position="299"/>
        <end position="359"/>
    </location>
</feature>
<feature type="domain" description="LIM zinc-binding 3" evidence="2">
    <location>
        <begin position="362"/>
        <end position="421"/>
    </location>
</feature>
<feature type="region of interest" description="Disordered" evidence="4">
    <location>
        <begin position="133"/>
        <end position="164"/>
    </location>
</feature>
<feature type="compositionally biased region" description="Basic and acidic residues" evidence="4">
    <location>
        <begin position="155"/>
        <end position="164"/>
    </location>
</feature>
<dbReference type="EMBL" id="DP000019">
    <property type="protein sequence ID" value="ABB89786.1"/>
    <property type="molecule type" value="Genomic_DNA"/>
</dbReference>
<dbReference type="SMR" id="Q2QLC3"/>
<dbReference type="GO" id="GO:0005737">
    <property type="term" value="C:cytoplasm"/>
    <property type="evidence" value="ECO:0000250"/>
    <property type="project" value="UniProtKB"/>
</dbReference>
<dbReference type="GO" id="GO:0005925">
    <property type="term" value="C:focal adhesion"/>
    <property type="evidence" value="ECO:0007669"/>
    <property type="project" value="UniProtKB-SubCell"/>
</dbReference>
<dbReference type="GO" id="GO:0008270">
    <property type="term" value="F:zinc ion binding"/>
    <property type="evidence" value="ECO:0000250"/>
    <property type="project" value="UniProtKB"/>
</dbReference>
<dbReference type="GO" id="GO:0008285">
    <property type="term" value="P:negative regulation of cell population proliferation"/>
    <property type="evidence" value="ECO:0000250"/>
    <property type="project" value="UniProtKB"/>
</dbReference>
<dbReference type="CDD" id="cd09413">
    <property type="entry name" value="LIM1_Testin"/>
    <property type="match status" value="1"/>
</dbReference>
<dbReference type="CDD" id="cd09416">
    <property type="entry name" value="LIM2_Testin"/>
    <property type="match status" value="1"/>
</dbReference>
<dbReference type="CDD" id="cd09419">
    <property type="entry name" value="LIM3_Testin"/>
    <property type="match status" value="1"/>
</dbReference>
<dbReference type="CDD" id="cd09829">
    <property type="entry name" value="PET_testin"/>
    <property type="match status" value="1"/>
</dbReference>
<dbReference type="FunFam" id="2.10.110.10:FF:000061">
    <property type="entry name" value="Testin"/>
    <property type="match status" value="1"/>
</dbReference>
<dbReference type="FunFam" id="2.10.110.10:FF:000065">
    <property type="entry name" value="Testin"/>
    <property type="match status" value="1"/>
</dbReference>
<dbReference type="FunFam" id="2.10.110.10:FF:000005">
    <property type="entry name" value="Testin isoform 1"/>
    <property type="match status" value="1"/>
</dbReference>
<dbReference type="Gene3D" id="2.10.110.10">
    <property type="entry name" value="Cysteine Rich Protein"/>
    <property type="match status" value="3"/>
</dbReference>
<dbReference type="InterPro" id="IPR034958">
    <property type="entry name" value="LIM1_Testin"/>
</dbReference>
<dbReference type="InterPro" id="IPR034959">
    <property type="entry name" value="LIM2_Testin"/>
</dbReference>
<dbReference type="InterPro" id="IPR034960">
    <property type="entry name" value="LIM3_Testin"/>
</dbReference>
<dbReference type="InterPro" id="IPR010442">
    <property type="entry name" value="PET_domain"/>
</dbReference>
<dbReference type="InterPro" id="IPR033724">
    <property type="entry name" value="PET_testin"/>
</dbReference>
<dbReference type="InterPro" id="IPR047120">
    <property type="entry name" value="Pk/Esn/Tes"/>
</dbReference>
<dbReference type="InterPro" id="IPR001781">
    <property type="entry name" value="Znf_LIM"/>
</dbReference>
<dbReference type="PANTHER" id="PTHR24211">
    <property type="entry name" value="LIM DOMAIN-CONTAINING PROTEIN"/>
    <property type="match status" value="1"/>
</dbReference>
<dbReference type="PANTHER" id="PTHR24211:SF1">
    <property type="entry name" value="TESTIN"/>
    <property type="match status" value="1"/>
</dbReference>
<dbReference type="Pfam" id="PF00412">
    <property type="entry name" value="LIM"/>
    <property type="match status" value="3"/>
</dbReference>
<dbReference type="Pfam" id="PF06297">
    <property type="entry name" value="PET"/>
    <property type="match status" value="1"/>
</dbReference>
<dbReference type="SMART" id="SM00132">
    <property type="entry name" value="LIM"/>
    <property type="match status" value="3"/>
</dbReference>
<dbReference type="SUPFAM" id="SSF57716">
    <property type="entry name" value="Glucocorticoid receptor-like (DNA-binding domain)"/>
    <property type="match status" value="2"/>
</dbReference>
<dbReference type="PROSITE" id="PS00478">
    <property type="entry name" value="LIM_DOMAIN_1"/>
    <property type="match status" value="2"/>
</dbReference>
<dbReference type="PROSITE" id="PS50023">
    <property type="entry name" value="LIM_DOMAIN_2"/>
    <property type="match status" value="3"/>
</dbReference>
<dbReference type="PROSITE" id="PS51303">
    <property type="entry name" value="PET"/>
    <property type="match status" value="1"/>
</dbReference>
<evidence type="ECO:0000250" key="1"/>
<evidence type="ECO:0000255" key="2">
    <source>
        <dbReference type="PROSITE-ProRule" id="PRU00125"/>
    </source>
</evidence>
<evidence type="ECO:0000255" key="3">
    <source>
        <dbReference type="PROSITE-ProRule" id="PRU00636"/>
    </source>
</evidence>
<evidence type="ECO:0000256" key="4">
    <source>
        <dbReference type="SAM" id="MobiDB-lite"/>
    </source>
</evidence>
<evidence type="ECO:0000305" key="5"/>
<keyword id="KW-0965">Cell junction</keyword>
<keyword id="KW-0963">Cytoplasm</keyword>
<keyword id="KW-0440">LIM domain</keyword>
<keyword id="KW-0479">Metal-binding</keyword>
<keyword id="KW-0677">Repeat</keyword>
<keyword id="KW-0862">Zinc</keyword>
<name>TES_PLEMO</name>
<protein>
    <recommendedName>
        <fullName>Testin</fullName>
    </recommendedName>
</protein>
<sequence>MDLENKVKKMGLGHEQGFGAPCLKCKEKCEGFELHFWRKICRNCKCGQEEHDVLLSNEEDRKVGKLFEDTKYTTLIAKLKSDGIPMYKRNVMILTNPVAAKKNVSINTVTYEWAPPVHNQALARQYMQMLPKEKQPVAGSEGAQYRKKQLAKQLPAHDQDPSKCHELSPREVKEMEQFVKKYKSEALGVGDVKLPCEMDAQGPKQMYIPGGDRSTLPAMGAMEDKSAEHKSSQYFCYCCKLSMKEGDPAIYAERAGYDKLWHPACFLCSICHELLVDMIYFWKNEKLYCGRHYCDSEKPRCAGCDELIFSNEYTQAENQNWHLKHFCCFDCDSILAGEIYVMVNDKPVCKPCYVKNHAVVCQGCHNAIDPEVQRVTYNNFSWHASTECFLCSCCSKCLIGQKFMPVEGMVFCSVECKKMMS</sequence>
<reference key="1">
    <citation type="submission" date="2005-11" db="EMBL/GenBank/DDBJ databases">
        <title>NISC comparative sequencing initiative.</title>
        <authorList>
            <person name="Antonellis A."/>
            <person name="Ayele K."/>
            <person name="Benjamin B."/>
            <person name="Blakesley R.W."/>
            <person name="Boakye A."/>
            <person name="Bouffard G.G."/>
            <person name="Brinkley C."/>
            <person name="Brooks S."/>
            <person name="Chu G."/>
            <person name="Coleman H."/>
            <person name="Engle J."/>
            <person name="Gestole M."/>
            <person name="Greene A."/>
            <person name="Guan X."/>
            <person name="Gupta J."/>
            <person name="Haghighi P."/>
            <person name="Han J."/>
            <person name="Hansen N."/>
            <person name="Ho S.-L."/>
            <person name="Hu P."/>
            <person name="Hunter G."/>
            <person name="Hurle B."/>
            <person name="Idol J.R."/>
            <person name="Kwong P."/>
            <person name="Laric P."/>
            <person name="Larson S."/>
            <person name="Lee-Lin S.-Q."/>
            <person name="Legaspi R."/>
            <person name="Madden M."/>
            <person name="Maduro Q.L."/>
            <person name="Maduro V.B."/>
            <person name="Margulies E.H."/>
            <person name="Masiello C."/>
            <person name="Maskeri B."/>
            <person name="McDowell J."/>
            <person name="Mojidi H.A."/>
            <person name="Mullikin J.C."/>
            <person name="Oestreicher J.S."/>
            <person name="Park M."/>
            <person name="Portnoy M.E."/>
            <person name="Prasad A."/>
            <person name="Puri O."/>
            <person name="Reddix-Dugue N."/>
            <person name="Schandler K."/>
            <person name="Schueler M.G."/>
            <person name="Sison C."/>
            <person name="Stantripop S."/>
            <person name="Stephen E."/>
            <person name="Taye A."/>
            <person name="Thomas J.W."/>
            <person name="Thomas P.J."/>
            <person name="Tsipouri V."/>
            <person name="Ung L."/>
            <person name="Vogt J.L."/>
            <person name="Wetherby K.D."/>
            <person name="Young A."/>
            <person name="Green E.D."/>
        </authorList>
    </citation>
    <scope>NUCLEOTIDE SEQUENCE [LARGE SCALE GENOMIC DNA]</scope>
</reference>
<gene>
    <name type="primary">TES</name>
</gene>
<proteinExistence type="inferred from homology"/>